<accession>A0L8J0</accession>
<keyword id="KW-1185">Reference proteome</keyword>
<keyword id="KW-0687">Ribonucleoprotein</keyword>
<keyword id="KW-0689">Ribosomal protein</keyword>
<reference key="1">
    <citation type="journal article" date="2009" name="Appl. Environ. Microbiol.">
        <title>Complete genome sequence of the chemolithoautotrophic marine magnetotactic coccus strain MC-1.</title>
        <authorList>
            <person name="Schubbe S."/>
            <person name="Williams T.J."/>
            <person name="Xie G."/>
            <person name="Kiss H.E."/>
            <person name="Brettin T.S."/>
            <person name="Martinez D."/>
            <person name="Ross C.A."/>
            <person name="Schuler D."/>
            <person name="Cox B.L."/>
            <person name="Nealson K.H."/>
            <person name="Bazylinski D.A."/>
        </authorList>
    </citation>
    <scope>NUCLEOTIDE SEQUENCE [LARGE SCALE GENOMIC DNA]</scope>
    <source>
        <strain>ATCC BAA-1437 / JCM 17883 / MC-1</strain>
    </source>
</reference>
<proteinExistence type="inferred from homology"/>
<dbReference type="EMBL" id="CP000471">
    <property type="protein sequence ID" value="ABK44283.1"/>
    <property type="molecule type" value="Genomic_DNA"/>
</dbReference>
<dbReference type="SMR" id="A0L8J0"/>
<dbReference type="STRING" id="156889.Mmc1_1775"/>
<dbReference type="KEGG" id="mgm:Mmc1_1775"/>
<dbReference type="eggNOG" id="COG0828">
    <property type="taxonomic scope" value="Bacteria"/>
</dbReference>
<dbReference type="HOGENOM" id="CLU_159258_0_2_5"/>
<dbReference type="Proteomes" id="UP000002586">
    <property type="component" value="Chromosome"/>
</dbReference>
<dbReference type="GO" id="GO:1990904">
    <property type="term" value="C:ribonucleoprotein complex"/>
    <property type="evidence" value="ECO:0007669"/>
    <property type="project" value="UniProtKB-KW"/>
</dbReference>
<dbReference type="GO" id="GO:0005840">
    <property type="term" value="C:ribosome"/>
    <property type="evidence" value="ECO:0007669"/>
    <property type="project" value="UniProtKB-KW"/>
</dbReference>
<dbReference type="GO" id="GO:0003735">
    <property type="term" value="F:structural constituent of ribosome"/>
    <property type="evidence" value="ECO:0007669"/>
    <property type="project" value="InterPro"/>
</dbReference>
<dbReference type="GO" id="GO:0006412">
    <property type="term" value="P:translation"/>
    <property type="evidence" value="ECO:0007669"/>
    <property type="project" value="UniProtKB-UniRule"/>
</dbReference>
<dbReference type="Gene3D" id="1.20.5.1150">
    <property type="entry name" value="Ribosomal protein S8"/>
    <property type="match status" value="1"/>
</dbReference>
<dbReference type="HAMAP" id="MF_00358">
    <property type="entry name" value="Ribosomal_bS21"/>
    <property type="match status" value="1"/>
</dbReference>
<dbReference type="InterPro" id="IPR001911">
    <property type="entry name" value="Ribosomal_bS21"/>
</dbReference>
<dbReference type="InterPro" id="IPR038380">
    <property type="entry name" value="Ribosomal_bS21_sf"/>
</dbReference>
<dbReference type="NCBIfam" id="TIGR00030">
    <property type="entry name" value="S21p"/>
    <property type="match status" value="1"/>
</dbReference>
<dbReference type="PANTHER" id="PTHR21109">
    <property type="entry name" value="MITOCHONDRIAL 28S RIBOSOMAL PROTEIN S21"/>
    <property type="match status" value="1"/>
</dbReference>
<dbReference type="PANTHER" id="PTHR21109:SF0">
    <property type="entry name" value="SMALL RIBOSOMAL SUBUNIT PROTEIN BS21M"/>
    <property type="match status" value="1"/>
</dbReference>
<dbReference type="Pfam" id="PF01165">
    <property type="entry name" value="Ribosomal_S21"/>
    <property type="match status" value="1"/>
</dbReference>
<dbReference type="PRINTS" id="PR00976">
    <property type="entry name" value="RIBOSOMALS21"/>
</dbReference>
<comment type="similarity">
    <text evidence="1">Belongs to the bacterial ribosomal protein bS21 family.</text>
</comment>
<name>RS21_MAGMM</name>
<feature type="chain" id="PRO_1000005135" description="Small ribosomal subunit protein bS21">
    <location>
        <begin position="1"/>
        <end position="67"/>
    </location>
</feature>
<protein>
    <recommendedName>
        <fullName evidence="1">Small ribosomal subunit protein bS21</fullName>
    </recommendedName>
    <alternativeName>
        <fullName evidence="2">30S ribosomal protein S21</fullName>
    </alternativeName>
</protein>
<sequence length="67" mass="8192">MRVDVYDNNVDQAIRVLKKKMNREGMFREMKKRKFFEKPSERRRRKKAEAIRRLRKKLRRASLAGLG</sequence>
<evidence type="ECO:0000255" key="1">
    <source>
        <dbReference type="HAMAP-Rule" id="MF_00358"/>
    </source>
</evidence>
<evidence type="ECO:0000305" key="2"/>
<gene>
    <name evidence="1" type="primary">rpsU</name>
    <name type="ordered locus">Mmc1_1775</name>
</gene>
<organism>
    <name type="scientific">Magnetococcus marinus (strain ATCC BAA-1437 / JCM 17883 / MC-1)</name>
    <dbReference type="NCBI Taxonomy" id="156889"/>
    <lineage>
        <taxon>Bacteria</taxon>
        <taxon>Pseudomonadati</taxon>
        <taxon>Pseudomonadota</taxon>
        <taxon>Alphaproteobacteria</taxon>
        <taxon>Magnetococcales</taxon>
        <taxon>Magnetococcaceae</taxon>
        <taxon>Magnetococcus</taxon>
    </lineage>
</organism>